<evidence type="ECO:0000255" key="1">
    <source>
        <dbReference type="HAMAP-Rule" id="MF_00741"/>
    </source>
</evidence>
<evidence type="ECO:0007829" key="2">
    <source>
        <dbReference type="PDB" id="3P4E"/>
    </source>
</evidence>
<protein>
    <recommendedName>
        <fullName evidence="1">Phosphoribosylformylglycinamidine cyclo-ligase</fullName>
        <ecNumber evidence="1">6.3.3.1</ecNumber>
    </recommendedName>
    <alternativeName>
        <fullName evidence="1">AIR synthase</fullName>
    </alternativeName>
    <alternativeName>
        <fullName evidence="1">AIRS</fullName>
    </alternativeName>
    <alternativeName>
        <fullName evidence="1">Phosphoribosyl-aminoimidazole synthetase</fullName>
    </alternativeName>
</protein>
<proteinExistence type="evidence at protein level"/>
<gene>
    <name evidence="1" type="primary">purM</name>
    <name type="ordered locus">VC_2226</name>
</gene>
<sequence>MSGNNPSLSYKDAGVDIDAGNALVERIKGAVKRTRRPEVMGGLGGFGALCELPTKYKHPVLVSGTDGVGTKLRLALDMKKHDTIGIDLVAMCVNDLIVQGAEPLFFLDYYATGKLDVDTAAEVISGIADGCLQAGCALIGGETAEMPGMYEGEDYDVAGFCVGVVEKEEIIDGSKVQVGDALIAVGSSGPHSNGYSLVRKILEVSKADKNERLAGKTIGEHLLAPTKIYIKSGLKLIAEHDIHAISHITGGGFWENIPRVLPEGTKAVIDGKSWEWPVIFQWLQEKGNVTTHEMYRTFNCGVGLIIALPKDQANAAVALLQAEGETAWVIGEIAAANSNEAQVEIN</sequence>
<comment type="catalytic activity">
    <reaction evidence="1">
        <text>2-formamido-N(1)-(5-O-phospho-beta-D-ribosyl)acetamidine + ATP = 5-amino-1-(5-phospho-beta-D-ribosyl)imidazole + ADP + phosphate + H(+)</text>
        <dbReference type="Rhea" id="RHEA:23032"/>
        <dbReference type="ChEBI" id="CHEBI:15378"/>
        <dbReference type="ChEBI" id="CHEBI:30616"/>
        <dbReference type="ChEBI" id="CHEBI:43474"/>
        <dbReference type="ChEBI" id="CHEBI:137981"/>
        <dbReference type="ChEBI" id="CHEBI:147287"/>
        <dbReference type="ChEBI" id="CHEBI:456216"/>
        <dbReference type="EC" id="6.3.3.1"/>
    </reaction>
</comment>
<comment type="pathway">
    <text evidence="1">Purine metabolism; IMP biosynthesis via de novo pathway; 5-amino-1-(5-phospho-D-ribosyl)imidazole from N(2)-formyl-N(1)-(5-phospho-D-ribosyl)glycinamide: step 2/2.</text>
</comment>
<comment type="subcellular location">
    <subcellularLocation>
        <location evidence="1">Cytoplasm</location>
    </subcellularLocation>
</comment>
<comment type="similarity">
    <text evidence="1">Belongs to the AIR synthase family.</text>
</comment>
<accession>Q9KPY6</accession>
<organism>
    <name type="scientific">Vibrio cholerae serotype O1 (strain ATCC 39315 / El Tor Inaba N16961)</name>
    <dbReference type="NCBI Taxonomy" id="243277"/>
    <lineage>
        <taxon>Bacteria</taxon>
        <taxon>Pseudomonadati</taxon>
        <taxon>Pseudomonadota</taxon>
        <taxon>Gammaproteobacteria</taxon>
        <taxon>Vibrionales</taxon>
        <taxon>Vibrionaceae</taxon>
        <taxon>Vibrio</taxon>
    </lineage>
</organism>
<keyword id="KW-0002">3D-structure</keyword>
<keyword id="KW-0067">ATP-binding</keyword>
<keyword id="KW-0963">Cytoplasm</keyword>
<keyword id="KW-0436">Ligase</keyword>
<keyword id="KW-0547">Nucleotide-binding</keyword>
<keyword id="KW-0658">Purine biosynthesis</keyword>
<keyword id="KW-1185">Reference proteome</keyword>
<dbReference type="EC" id="6.3.3.1" evidence="1"/>
<dbReference type="EMBL" id="AE003852">
    <property type="protein sequence ID" value="AAF95370.1"/>
    <property type="molecule type" value="Genomic_DNA"/>
</dbReference>
<dbReference type="PIR" id="F82103">
    <property type="entry name" value="F82103"/>
</dbReference>
<dbReference type="RefSeq" id="NP_231857.1">
    <property type="nucleotide sequence ID" value="NC_002505.1"/>
</dbReference>
<dbReference type="RefSeq" id="WP_000016423.1">
    <property type="nucleotide sequence ID" value="NZ_LT906614.1"/>
</dbReference>
<dbReference type="PDB" id="3P4E">
    <property type="method" value="X-ray"/>
    <property type="resolution" value="1.77 A"/>
    <property type="chains" value="A=1-346"/>
</dbReference>
<dbReference type="PDBsum" id="3P4E"/>
<dbReference type="SMR" id="Q9KPY6"/>
<dbReference type="STRING" id="243277.VC_2226"/>
<dbReference type="DNASU" id="2613266"/>
<dbReference type="EnsemblBacteria" id="AAF95370">
    <property type="protein sequence ID" value="AAF95370"/>
    <property type="gene ID" value="VC_2226"/>
</dbReference>
<dbReference type="GeneID" id="89513785"/>
<dbReference type="KEGG" id="vch:VC_2226"/>
<dbReference type="PATRIC" id="fig|243277.26.peg.2124"/>
<dbReference type="eggNOG" id="COG0150">
    <property type="taxonomic scope" value="Bacteria"/>
</dbReference>
<dbReference type="HOGENOM" id="CLU_047116_0_0_6"/>
<dbReference type="UniPathway" id="UPA00074">
    <property type="reaction ID" value="UER00129"/>
</dbReference>
<dbReference type="EvolutionaryTrace" id="Q9KPY6"/>
<dbReference type="Proteomes" id="UP000000584">
    <property type="component" value="Chromosome 1"/>
</dbReference>
<dbReference type="GO" id="GO:0005829">
    <property type="term" value="C:cytosol"/>
    <property type="evidence" value="ECO:0000318"/>
    <property type="project" value="GO_Central"/>
</dbReference>
<dbReference type="GO" id="GO:0005524">
    <property type="term" value="F:ATP binding"/>
    <property type="evidence" value="ECO:0007669"/>
    <property type="project" value="UniProtKB-KW"/>
</dbReference>
<dbReference type="GO" id="GO:0004637">
    <property type="term" value="F:phosphoribosylamine-glycine ligase activity"/>
    <property type="evidence" value="ECO:0000318"/>
    <property type="project" value="GO_Central"/>
</dbReference>
<dbReference type="GO" id="GO:0004641">
    <property type="term" value="F:phosphoribosylformylglycinamidine cyclo-ligase activity"/>
    <property type="evidence" value="ECO:0000318"/>
    <property type="project" value="GO_Central"/>
</dbReference>
<dbReference type="GO" id="GO:0006189">
    <property type="term" value="P:'de novo' IMP biosynthetic process"/>
    <property type="evidence" value="ECO:0007669"/>
    <property type="project" value="UniProtKB-UniRule"/>
</dbReference>
<dbReference type="GO" id="GO:0046084">
    <property type="term" value="P:adenine biosynthetic process"/>
    <property type="evidence" value="ECO:0000318"/>
    <property type="project" value="GO_Central"/>
</dbReference>
<dbReference type="GO" id="GO:0006164">
    <property type="term" value="P:purine nucleotide biosynthetic process"/>
    <property type="evidence" value="ECO:0000318"/>
    <property type="project" value="GO_Central"/>
</dbReference>
<dbReference type="CDD" id="cd02196">
    <property type="entry name" value="PurM"/>
    <property type="match status" value="1"/>
</dbReference>
<dbReference type="FunFam" id="3.30.1330.10:FF:000001">
    <property type="entry name" value="Phosphoribosylformylglycinamidine cyclo-ligase"/>
    <property type="match status" value="1"/>
</dbReference>
<dbReference type="FunFam" id="3.90.650.10:FF:000001">
    <property type="entry name" value="Phosphoribosylformylglycinamidine cyclo-ligase"/>
    <property type="match status" value="1"/>
</dbReference>
<dbReference type="Gene3D" id="3.90.650.10">
    <property type="entry name" value="PurM-like C-terminal domain"/>
    <property type="match status" value="1"/>
</dbReference>
<dbReference type="Gene3D" id="3.30.1330.10">
    <property type="entry name" value="PurM-like, N-terminal domain"/>
    <property type="match status" value="1"/>
</dbReference>
<dbReference type="HAMAP" id="MF_00741">
    <property type="entry name" value="AIRS"/>
    <property type="match status" value="1"/>
</dbReference>
<dbReference type="InterPro" id="IPR010918">
    <property type="entry name" value="PurM-like_C_dom"/>
</dbReference>
<dbReference type="InterPro" id="IPR036676">
    <property type="entry name" value="PurM-like_C_sf"/>
</dbReference>
<dbReference type="InterPro" id="IPR016188">
    <property type="entry name" value="PurM-like_N"/>
</dbReference>
<dbReference type="InterPro" id="IPR036921">
    <property type="entry name" value="PurM-like_N_sf"/>
</dbReference>
<dbReference type="InterPro" id="IPR004733">
    <property type="entry name" value="PurM_cligase"/>
</dbReference>
<dbReference type="NCBIfam" id="TIGR00878">
    <property type="entry name" value="purM"/>
    <property type="match status" value="1"/>
</dbReference>
<dbReference type="PANTHER" id="PTHR10520:SF12">
    <property type="entry name" value="TRIFUNCTIONAL PURINE BIOSYNTHETIC PROTEIN ADENOSINE-3"/>
    <property type="match status" value="1"/>
</dbReference>
<dbReference type="PANTHER" id="PTHR10520">
    <property type="entry name" value="TRIFUNCTIONAL PURINE BIOSYNTHETIC PROTEIN ADENOSINE-3-RELATED"/>
    <property type="match status" value="1"/>
</dbReference>
<dbReference type="Pfam" id="PF00586">
    <property type="entry name" value="AIRS"/>
    <property type="match status" value="1"/>
</dbReference>
<dbReference type="Pfam" id="PF02769">
    <property type="entry name" value="AIRS_C"/>
    <property type="match status" value="1"/>
</dbReference>
<dbReference type="SUPFAM" id="SSF56042">
    <property type="entry name" value="PurM C-terminal domain-like"/>
    <property type="match status" value="1"/>
</dbReference>
<dbReference type="SUPFAM" id="SSF55326">
    <property type="entry name" value="PurM N-terminal domain-like"/>
    <property type="match status" value="1"/>
</dbReference>
<name>PUR5_VIBCH</name>
<reference key="1">
    <citation type="journal article" date="2000" name="Nature">
        <title>DNA sequence of both chromosomes of the cholera pathogen Vibrio cholerae.</title>
        <authorList>
            <person name="Heidelberg J.F."/>
            <person name="Eisen J.A."/>
            <person name="Nelson W.C."/>
            <person name="Clayton R.A."/>
            <person name="Gwinn M.L."/>
            <person name="Dodson R.J."/>
            <person name="Haft D.H."/>
            <person name="Hickey E.K."/>
            <person name="Peterson J.D."/>
            <person name="Umayam L.A."/>
            <person name="Gill S.R."/>
            <person name="Nelson K.E."/>
            <person name="Read T.D."/>
            <person name="Tettelin H."/>
            <person name="Richardson D.L."/>
            <person name="Ermolaeva M.D."/>
            <person name="Vamathevan J.J."/>
            <person name="Bass S."/>
            <person name="Qin H."/>
            <person name="Dragoi I."/>
            <person name="Sellers P."/>
            <person name="McDonald L.A."/>
            <person name="Utterback T.R."/>
            <person name="Fleischmann R.D."/>
            <person name="Nierman W.C."/>
            <person name="White O."/>
            <person name="Salzberg S.L."/>
            <person name="Smith H.O."/>
            <person name="Colwell R.R."/>
            <person name="Mekalanos J.J."/>
            <person name="Venter J.C."/>
            <person name="Fraser C.M."/>
        </authorList>
    </citation>
    <scope>NUCLEOTIDE SEQUENCE [LARGE SCALE GENOMIC DNA]</scope>
    <source>
        <strain>ATCC 39315 / El Tor Inaba N16961</strain>
    </source>
</reference>
<feature type="chain" id="PRO_0000148270" description="Phosphoribosylformylglycinamidine cyclo-ligase">
    <location>
        <begin position="1"/>
        <end position="346"/>
    </location>
</feature>
<feature type="helix" evidence="2">
    <location>
        <begin position="19"/>
        <end position="33"/>
    </location>
</feature>
<feature type="strand" evidence="2">
    <location>
        <begin position="57"/>
        <end position="66"/>
    </location>
</feature>
<feature type="helix" evidence="2">
    <location>
        <begin position="70"/>
        <end position="77"/>
    </location>
</feature>
<feature type="helix" evidence="2">
    <location>
        <begin position="84"/>
        <end position="97"/>
    </location>
</feature>
<feature type="turn" evidence="2">
    <location>
        <begin position="98"/>
        <end position="100"/>
    </location>
</feature>
<feature type="strand" evidence="2">
    <location>
        <begin position="102"/>
        <end position="114"/>
    </location>
</feature>
<feature type="helix" evidence="2">
    <location>
        <begin position="117"/>
        <end position="134"/>
    </location>
</feature>
<feature type="strand" evidence="2">
    <location>
        <begin position="137"/>
        <end position="145"/>
    </location>
</feature>
<feature type="strand" evidence="2">
    <location>
        <begin position="155"/>
        <end position="166"/>
    </location>
</feature>
<feature type="helix" evidence="2">
    <location>
        <begin position="167"/>
        <end position="169"/>
    </location>
</feature>
<feature type="strand" evidence="2">
    <location>
        <begin position="181"/>
        <end position="186"/>
    </location>
</feature>
<feature type="strand" evidence="2">
    <location>
        <begin position="188"/>
        <end position="190"/>
    </location>
</feature>
<feature type="helix" evidence="2">
    <location>
        <begin position="195"/>
        <end position="205"/>
    </location>
</feature>
<feature type="helix" evidence="2">
    <location>
        <begin position="218"/>
        <end position="223"/>
    </location>
</feature>
<feature type="helix" evidence="2">
    <location>
        <begin position="230"/>
        <end position="239"/>
    </location>
</feature>
<feature type="strand" evidence="2">
    <location>
        <begin position="244"/>
        <end position="247"/>
    </location>
</feature>
<feature type="helix" evidence="2">
    <location>
        <begin position="252"/>
        <end position="256"/>
    </location>
</feature>
<feature type="helix" evidence="2">
    <location>
        <begin position="257"/>
        <end position="260"/>
    </location>
</feature>
<feature type="strand" evidence="2">
    <location>
        <begin position="265"/>
        <end position="270"/>
    </location>
</feature>
<feature type="helix" evidence="2">
    <location>
        <begin position="278"/>
        <end position="287"/>
    </location>
</feature>
<feature type="helix" evidence="2">
    <location>
        <begin position="291"/>
        <end position="295"/>
    </location>
</feature>
<feature type="strand" evidence="2">
    <location>
        <begin position="302"/>
        <end position="308"/>
    </location>
</feature>
<feature type="helix" evidence="2">
    <location>
        <begin position="310"/>
        <end position="322"/>
    </location>
</feature>
<feature type="strand" evidence="2">
    <location>
        <begin position="327"/>
        <end position="335"/>
    </location>
</feature>
<feature type="strand" evidence="2">
    <location>
        <begin position="338"/>
        <end position="340"/>
    </location>
</feature>
<feature type="strand" evidence="2">
    <location>
        <begin position="342"/>
        <end position="346"/>
    </location>
</feature>